<comment type="function">
    <molecule>Ubiquitin</molecule>
    <text evidence="1">Exists either covalently attached to another protein, or free (unanchored). When covalently bound, it is conjugated to target proteins via an isopeptide bond either as a monomer (monoubiquitin), a polymer linked via different Lys residues of the ubiquitin (polyubiquitin chains) or a linear polymer linked via the initiator Met of the ubiquitin (linear polyubiquitin chains). Polyubiquitin chains, when attached to a target protein, have different functions depending on the Lys residue of the ubiquitin that is linked: Lys-6-linked may be involved in DNA repair; Lys-11-linked is involved in ERAD (endoplasmic reticulum-associated degradation) and in cell-cycle regulation; Lys-29-linked is involved in lysosomal degradation; Lys-33-linked is involved in kinase modification; Lys-48-linked is involved in protein degradation via the proteasome; Lys-63-linked is involved in endocytosis, and DNA-damage responses. Linear polymer chains formed via attachment by the initiator Met lead to cell signaling. Ubiquitin is usually conjugated to Lys residues of target proteins, however, in rare cases, conjugation to Cys or Ser residues has been observed. When polyubiquitin is free (unanchored-polyubiquitin), it also has distinct roles, such as in activation of protein kinases, and in signaling (By similarity).</text>
</comment>
<comment type="function">
    <molecule>Large ribosomal subunit protein eL40</molecule>
    <text evidence="2">Component of the ribosome, a large ribonucleoprotein complex responsible for the synthesis of proteins in the cell. The small ribosomal subunit (SSU) binds messenger RNAs (mRNAs) and translates the encoded message by selecting cognate aminoacyl-transfer RNA (tRNA) molecules. The large subunit (LSU) contains the ribosomal catalytic site termed the peptidyl transferase center (PTC), which catalyzes the formation of peptide bonds, thereby polymerizing the amino acids delivered by tRNAs into a polypeptide chain. The nascent polypeptides leave the ribosome through a tunnel in the LSU and interact with protein factors that function in enzymatic processing, targeting, and the membrane insertion of nascent chains at the exit of the ribosomal tunnel. eL40 is essential for translation of a subset of cellular transcripts, including stress response transcripts, such as DDR2.</text>
</comment>
<comment type="subunit">
    <molecule>Large ribosomal subunit protein eL40</molecule>
    <text evidence="4">Component of the large ribosomal subunit (LSU). Mature N.crassa ribosomes consist of a small (40S) and a large (60S) subunit. The 40S small subunit contains 1 molecule of ribosomal RNA (18S rRNA) and at least 32 different proteins. The large 60S subunit contains 3 rRNA molecules (26S, 5.8S and 5S rRNA) and at least 42 different proteins.</text>
</comment>
<comment type="subcellular location">
    <molecule>Ubiquitin</molecule>
    <subcellularLocation>
        <location evidence="1">Cytoplasm</location>
    </subcellularLocation>
    <subcellularLocation>
        <location evidence="1">Nucleus</location>
    </subcellularLocation>
</comment>
<comment type="subcellular location">
    <molecule>Large ribosomal subunit protein eL40</molecule>
    <subcellularLocation>
        <location evidence="2">Cytoplasm</location>
    </subcellularLocation>
</comment>
<comment type="miscellaneous">
    <text evidence="4">Ubiquitin is encoded by 3 different genes. Crp-79 is synthesized as a polyprotein with one copy of ubiquitin fused to ribosomal protein eL40. Crp-6/ubi-3 is a polyprotein with one copy of ubiquitin fused to ribosomal protein eS31. Ubi is a polyprotein containing 4 exact head to tail repeats of ubiquitin.</text>
</comment>
<comment type="similarity">
    <text evidence="4">In the N-terminal section; belongs to the ubiquitin family.</text>
</comment>
<comment type="similarity">
    <text evidence="4">In the C-terminal section; belongs to the eukaryotic ribosomal protein eL40 family.</text>
</comment>
<keyword id="KW-0963">Cytoplasm</keyword>
<keyword id="KW-1017">Isopeptide bond</keyword>
<keyword id="KW-0539">Nucleus</keyword>
<keyword id="KW-1185">Reference proteome</keyword>
<keyword id="KW-0687">Ribonucleoprotein</keyword>
<keyword id="KW-0689">Ribosomal protein</keyword>
<keyword id="KW-0832">Ubl conjugation</keyword>
<organism>
    <name type="scientific">Neurospora crassa (strain ATCC 24698 / 74-OR23-1A / CBS 708.71 / DSM 1257 / FGSC 987)</name>
    <dbReference type="NCBI Taxonomy" id="367110"/>
    <lineage>
        <taxon>Eukaryota</taxon>
        <taxon>Fungi</taxon>
        <taxon>Dikarya</taxon>
        <taxon>Ascomycota</taxon>
        <taxon>Pezizomycotina</taxon>
        <taxon>Sordariomycetes</taxon>
        <taxon>Sordariomycetidae</taxon>
        <taxon>Sordariales</taxon>
        <taxon>Sordariaceae</taxon>
        <taxon>Neurospora</taxon>
    </lineage>
</organism>
<protein>
    <recommendedName>
        <fullName evidence="4">Ubiquitin-ribosomal protein eL40 fusion protein</fullName>
    </recommendedName>
    <component>
        <recommendedName>
            <fullName>Ubiquitin</fullName>
        </recommendedName>
    </component>
    <component>
        <recommendedName>
            <fullName evidence="4">Large ribosomal subunit protein eL40</fullName>
        </recommendedName>
        <alternativeName>
            <fullName>60S ribosomal protein L40</fullName>
        </alternativeName>
        <alternativeName>
            <fullName>CEP52</fullName>
        </alternativeName>
        <alternativeName>
            <fullName>Cytoplasmic ribosomal protein 79</fullName>
            <shortName>CRP79</shortName>
        </alternativeName>
    </component>
</protein>
<dbReference type="EMBL" id="CM002239">
    <property type="protein sequence ID" value="EAA32676.3"/>
    <property type="molecule type" value="Genomic_DNA"/>
</dbReference>
<dbReference type="RefSeq" id="XP_961912.3">
    <property type="nucleotide sequence ID" value="XM_956819.3"/>
</dbReference>
<dbReference type="BMRB" id="P0C224"/>
<dbReference type="SMR" id="P0C224"/>
<dbReference type="FunCoup" id="P0C224">
    <property type="interactions" value="941"/>
</dbReference>
<dbReference type="STRING" id="367110.P0C224"/>
<dbReference type="PaxDb" id="5141-EFNCRP00000004982"/>
<dbReference type="EnsemblFungi" id="EAA32676">
    <property type="protein sequence ID" value="EAA32676"/>
    <property type="gene ID" value="NCU05275"/>
</dbReference>
<dbReference type="GeneID" id="3878065"/>
<dbReference type="KEGG" id="ncr:NCU05275"/>
<dbReference type="VEuPathDB" id="FungiDB:NCU05275"/>
<dbReference type="HOGENOM" id="CLU_010412_3_4_1"/>
<dbReference type="InParanoid" id="P0C224"/>
<dbReference type="OrthoDB" id="428577at2759"/>
<dbReference type="Proteomes" id="UP000001805">
    <property type="component" value="Chromosome 4, Linkage Group IV"/>
</dbReference>
<dbReference type="GO" id="GO:0005737">
    <property type="term" value="C:cytoplasm"/>
    <property type="evidence" value="ECO:0000318"/>
    <property type="project" value="GO_Central"/>
</dbReference>
<dbReference type="GO" id="GO:0005634">
    <property type="term" value="C:nucleus"/>
    <property type="evidence" value="ECO:0000318"/>
    <property type="project" value="GO_Central"/>
</dbReference>
<dbReference type="GO" id="GO:1990904">
    <property type="term" value="C:ribonucleoprotein complex"/>
    <property type="evidence" value="ECO:0007669"/>
    <property type="project" value="UniProtKB-KW"/>
</dbReference>
<dbReference type="GO" id="GO:0005840">
    <property type="term" value="C:ribosome"/>
    <property type="evidence" value="ECO:0007669"/>
    <property type="project" value="UniProtKB-KW"/>
</dbReference>
<dbReference type="GO" id="GO:0031386">
    <property type="term" value="F:protein tag activity"/>
    <property type="evidence" value="ECO:0000318"/>
    <property type="project" value="GO_Central"/>
</dbReference>
<dbReference type="GO" id="GO:0003735">
    <property type="term" value="F:structural constituent of ribosome"/>
    <property type="evidence" value="ECO:0007669"/>
    <property type="project" value="InterPro"/>
</dbReference>
<dbReference type="GO" id="GO:0031625">
    <property type="term" value="F:ubiquitin protein ligase binding"/>
    <property type="evidence" value="ECO:0000318"/>
    <property type="project" value="GO_Central"/>
</dbReference>
<dbReference type="GO" id="GO:0019941">
    <property type="term" value="P:modification-dependent protein catabolic process"/>
    <property type="evidence" value="ECO:0000318"/>
    <property type="project" value="GO_Central"/>
</dbReference>
<dbReference type="GO" id="GO:0016567">
    <property type="term" value="P:protein ubiquitination"/>
    <property type="evidence" value="ECO:0000318"/>
    <property type="project" value="GO_Central"/>
</dbReference>
<dbReference type="GO" id="GO:0006412">
    <property type="term" value="P:translation"/>
    <property type="evidence" value="ECO:0007669"/>
    <property type="project" value="InterPro"/>
</dbReference>
<dbReference type="CDD" id="cd01803">
    <property type="entry name" value="Ubl_ubiquitin"/>
    <property type="match status" value="1"/>
</dbReference>
<dbReference type="FunFam" id="3.10.20.90:FF:000014">
    <property type="entry name" value="Ubiquitin-60S ribosomal L40 fusion"/>
    <property type="match status" value="1"/>
</dbReference>
<dbReference type="FunFam" id="4.10.1060.50:FF:000001">
    <property type="entry name" value="ubiquitin-60S ribosomal protein L40"/>
    <property type="match status" value="1"/>
</dbReference>
<dbReference type="Gene3D" id="4.10.1060.50">
    <property type="match status" value="1"/>
</dbReference>
<dbReference type="Gene3D" id="3.10.20.90">
    <property type="entry name" value="Phosphatidylinositol 3-kinase Catalytic Subunit, Chain A, domain 1"/>
    <property type="match status" value="1"/>
</dbReference>
<dbReference type="InterPro" id="IPR001975">
    <property type="entry name" value="Ribosomal_eL40_dom"/>
</dbReference>
<dbReference type="InterPro" id="IPR038587">
    <property type="entry name" value="Ribosomal_eL40_sf"/>
</dbReference>
<dbReference type="InterPro" id="IPR000626">
    <property type="entry name" value="Ubiquitin-like_dom"/>
</dbReference>
<dbReference type="InterPro" id="IPR029071">
    <property type="entry name" value="Ubiquitin-like_domsf"/>
</dbReference>
<dbReference type="InterPro" id="IPR019954">
    <property type="entry name" value="Ubiquitin_CS"/>
</dbReference>
<dbReference type="InterPro" id="IPR019956">
    <property type="entry name" value="Ubiquitin_dom"/>
</dbReference>
<dbReference type="InterPro" id="IPR050158">
    <property type="entry name" value="Ubiquitin_ubiquitin-like"/>
</dbReference>
<dbReference type="PANTHER" id="PTHR10666">
    <property type="entry name" value="UBIQUITIN"/>
    <property type="match status" value="1"/>
</dbReference>
<dbReference type="Pfam" id="PF01020">
    <property type="entry name" value="Ribosomal_L40e"/>
    <property type="match status" value="1"/>
</dbReference>
<dbReference type="Pfam" id="PF00240">
    <property type="entry name" value="ubiquitin"/>
    <property type="match status" value="1"/>
</dbReference>
<dbReference type="PRINTS" id="PR00348">
    <property type="entry name" value="UBIQUITIN"/>
</dbReference>
<dbReference type="SMART" id="SM01377">
    <property type="entry name" value="Ribosomal_L40e"/>
    <property type="match status" value="1"/>
</dbReference>
<dbReference type="SMART" id="SM00213">
    <property type="entry name" value="UBQ"/>
    <property type="match status" value="1"/>
</dbReference>
<dbReference type="SUPFAM" id="SSF54236">
    <property type="entry name" value="Ubiquitin-like"/>
    <property type="match status" value="1"/>
</dbReference>
<dbReference type="PROSITE" id="PS00299">
    <property type="entry name" value="UBIQUITIN_1"/>
    <property type="match status" value="1"/>
</dbReference>
<dbReference type="PROSITE" id="PS50053">
    <property type="entry name" value="UBIQUITIN_2"/>
    <property type="match status" value="1"/>
</dbReference>
<evidence type="ECO:0000250" key="1"/>
<evidence type="ECO:0000250" key="2">
    <source>
        <dbReference type="UniProtKB" id="P0CH08"/>
    </source>
</evidence>
<evidence type="ECO:0000255" key="3">
    <source>
        <dbReference type="PROSITE-ProRule" id="PRU00214"/>
    </source>
</evidence>
<evidence type="ECO:0000305" key="4"/>
<accession>P0C224</accession>
<accession>P13117</accession>
<accession>Q7RVR9</accession>
<accession>Q7RVX5</accession>
<accession>Q7RWD8</accession>
<gene>
    <name type="primary">crp-79</name>
    <name type="ORF">NCU05275</name>
</gene>
<reference key="1">
    <citation type="journal article" date="2003" name="Nature">
        <title>The genome sequence of the filamentous fungus Neurospora crassa.</title>
        <authorList>
            <person name="Galagan J.E."/>
            <person name="Calvo S.E."/>
            <person name="Borkovich K.A."/>
            <person name="Selker E.U."/>
            <person name="Read N.D."/>
            <person name="Jaffe D.B."/>
            <person name="FitzHugh W."/>
            <person name="Ma L.-J."/>
            <person name="Smirnov S."/>
            <person name="Purcell S."/>
            <person name="Rehman B."/>
            <person name="Elkins T."/>
            <person name="Engels R."/>
            <person name="Wang S."/>
            <person name="Nielsen C.B."/>
            <person name="Butler J."/>
            <person name="Endrizzi M."/>
            <person name="Qui D."/>
            <person name="Ianakiev P."/>
            <person name="Bell-Pedersen D."/>
            <person name="Nelson M.A."/>
            <person name="Werner-Washburne M."/>
            <person name="Selitrennikoff C.P."/>
            <person name="Kinsey J.A."/>
            <person name="Braun E.L."/>
            <person name="Zelter A."/>
            <person name="Schulte U."/>
            <person name="Kothe G.O."/>
            <person name="Jedd G."/>
            <person name="Mewes H.-W."/>
            <person name="Staben C."/>
            <person name="Marcotte E."/>
            <person name="Greenberg D."/>
            <person name="Roy A."/>
            <person name="Foley K."/>
            <person name="Naylor J."/>
            <person name="Stange-Thomann N."/>
            <person name="Barrett R."/>
            <person name="Gnerre S."/>
            <person name="Kamal M."/>
            <person name="Kamvysselis M."/>
            <person name="Mauceli E.W."/>
            <person name="Bielke C."/>
            <person name="Rudd S."/>
            <person name="Frishman D."/>
            <person name="Krystofova S."/>
            <person name="Rasmussen C."/>
            <person name="Metzenberg R.L."/>
            <person name="Perkins D.D."/>
            <person name="Kroken S."/>
            <person name="Cogoni C."/>
            <person name="Macino G."/>
            <person name="Catcheside D.E.A."/>
            <person name="Li W."/>
            <person name="Pratt R.J."/>
            <person name="Osmani S.A."/>
            <person name="DeSouza C.P.C."/>
            <person name="Glass N.L."/>
            <person name="Orbach M.J."/>
            <person name="Berglund J.A."/>
            <person name="Voelker R."/>
            <person name="Yarden O."/>
            <person name="Plamann M."/>
            <person name="Seiler S."/>
            <person name="Dunlap J.C."/>
            <person name="Radford A."/>
            <person name="Aramayo R."/>
            <person name="Natvig D.O."/>
            <person name="Alex L.A."/>
            <person name="Mannhaupt G."/>
            <person name="Ebbole D.J."/>
            <person name="Freitag M."/>
            <person name="Paulsen I."/>
            <person name="Sachs M.S."/>
            <person name="Lander E.S."/>
            <person name="Nusbaum C."/>
            <person name="Birren B.W."/>
        </authorList>
    </citation>
    <scope>NUCLEOTIDE SEQUENCE [LARGE SCALE GENOMIC DNA]</scope>
    <source>
        <strain>ATCC 24698 / 74-OR23-1A / CBS 708.71 / DSM 1257 / FGSC 987</strain>
    </source>
</reference>
<sequence length="128" mass="14637">MQIFVKTLTGKTITLEVESSDTIDNVKQKIQDKEGIPPDQQRLIFAGKQLEDGRTLSDYNIQKESTLHLVLRLRGGIIEPSLKALASKFNCDKMICRKCYARLPPRATNCRKRKCGHTNQLRPKKKLK</sequence>
<proteinExistence type="evidence at protein level"/>
<feature type="chain" id="PRO_0000114858" description="Ubiquitin">
    <location>
        <begin position="1"/>
        <end position="76"/>
    </location>
</feature>
<feature type="chain" id="PRO_0000260161" description="Large ribosomal subunit protein eL40">
    <location>
        <begin position="77"/>
        <end position="128"/>
    </location>
</feature>
<feature type="domain" description="Ubiquitin-like" evidence="3">
    <location>
        <begin position="14"/>
        <end position="89"/>
    </location>
</feature>
<feature type="cross-link" description="Glycyl lysine isopeptide (Lys-Gly) (interchain with G-Cter in ubiquitin)">
    <location>
        <position position="6"/>
    </location>
</feature>
<feature type="cross-link" description="Glycyl lysine isopeptide (Lys-Gly) (interchain with G-Cter in ubiquitin)">
    <location>
        <position position="11"/>
    </location>
</feature>
<feature type="cross-link" description="Glycyl lysine isopeptide (Lys-Gly) (interchain with G-Cter in ubiquitin)">
    <location>
        <position position="27"/>
    </location>
</feature>
<feature type="cross-link" description="Glycyl lysine isopeptide (Lys-Gly) (interchain with G-Cter in ubiquitin)">
    <location>
        <position position="29"/>
    </location>
</feature>
<feature type="cross-link" description="Glycyl lysine isopeptide (Lys-Gly) (interchain with G-Cter in ubiquitin)">
    <location>
        <position position="33"/>
    </location>
</feature>
<feature type="cross-link" description="Glycyl lysine isopeptide (Lys-Gly) (interchain with G-Cter in ubiquitin)" evidence="1">
    <location>
        <position position="48"/>
    </location>
</feature>
<feature type="cross-link" description="Glycyl lysine isopeptide (Lys-Gly) (interchain with G-Cter in ubiquitin)">
    <location>
        <position position="63"/>
    </location>
</feature>
<feature type="cross-link" description="Glycyl lysine isopeptide (Gly-Lys) (interchain with K-? in acceptor proteins)" evidence="3">
    <location>
        <position position="76"/>
    </location>
</feature>
<name>RL40_NEUCR</name>